<organism>
    <name type="scientific">Ehrlichia canis (strain Jake)</name>
    <dbReference type="NCBI Taxonomy" id="269484"/>
    <lineage>
        <taxon>Bacteria</taxon>
        <taxon>Pseudomonadati</taxon>
        <taxon>Pseudomonadota</taxon>
        <taxon>Alphaproteobacteria</taxon>
        <taxon>Rickettsiales</taxon>
        <taxon>Anaplasmataceae</taxon>
        <taxon>Ehrlichia</taxon>
    </lineage>
</organism>
<evidence type="ECO:0000255" key="1">
    <source>
        <dbReference type="HAMAP-Rule" id="MF_00391"/>
    </source>
</evidence>
<evidence type="ECO:0000305" key="2"/>
<gene>
    <name evidence="1" type="primary">rpmH</name>
    <name type="ordered locus">Ecaj_0583</name>
</gene>
<sequence>MKGTFQPSRIVRKRRHGFRSRMSTKMGRRILNRRRAQGRRVLCA</sequence>
<keyword id="KW-0687">Ribonucleoprotein</keyword>
<keyword id="KW-0689">Ribosomal protein</keyword>
<protein>
    <recommendedName>
        <fullName evidence="1">Large ribosomal subunit protein bL34</fullName>
    </recommendedName>
    <alternativeName>
        <fullName evidence="2">50S ribosomal protein L34</fullName>
    </alternativeName>
</protein>
<accession>Q3YRN8</accession>
<reference key="1">
    <citation type="journal article" date="2006" name="J. Bacteriol.">
        <title>The genome of the obligately intracellular bacterium Ehrlichia canis reveals themes of complex membrane structure and immune evasion strategies.</title>
        <authorList>
            <person name="Mavromatis K."/>
            <person name="Doyle C.K."/>
            <person name="Lykidis A."/>
            <person name="Ivanova N."/>
            <person name="Francino M.P."/>
            <person name="Chain P."/>
            <person name="Shin M."/>
            <person name="Malfatti S."/>
            <person name="Larimer F."/>
            <person name="Copeland A."/>
            <person name="Detter J.C."/>
            <person name="Land M."/>
            <person name="Richardson P.M."/>
            <person name="Yu X.J."/>
            <person name="Walker D.H."/>
            <person name="McBride J.W."/>
            <person name="Kyrpides N.C."/>
        </authorList>
    </citation>
    <scope>NUCLEOTIDE SEQUENCE [LARGE SCALE GENOMIC DNA]</scope>
    <source>
        <strain>Jake</strain>
    </source>
</reference>
<comment type="similarity">
    <text evidence="1">Belongs to the bacterial ribosomal protein bL34 family.</text>
</comment>
<dbReference type="EMBL" id="CP000107">
    <property type="protein sequence ID" value="AAZ68617.1"/>
    <property type="molecule type" value="Genomic_DNA"/>
</dbReference>
<dbReference type="SMR" id="Q3YRN8"/>
<dbReference type="FunCoup" id="Q3YRN8">
    <property type="interactions" value="214"/>
</dbReference>
<dbReference type="STRING" id="269484.Ecaj_0583"/>
<dbReference type="KEGG" id="ecn:Ecaj_0583"/>
<dbReference type="eggNOG" id="COG0230">
    <property type="taxonomic scope" value="Bacteria"/>
</dbReference>
<dbReference type="HOGENOM" id="CLU_129938_2_0_5"/>
<dbReference type="InParanoid" id="Q3YRN8"/>
<dbReference type="Proteomes" id="UP000000435">
    <property type="component" value="Chromosome"/>
</dbReference>
<dbReference type="GO" id="GO:1990904">
    <property type="term" value="C:ribonucleoprotein complex"/>
    <property type="evidence" value="ECO:0007669"/>
    <property type="project" value="UniProtKB-KW"/>
</dbReference>
<dbReference type="GO" id="GO:0005840">
    <property type="term" value="C:ribosome"/>
    <property type="evidence" value="ECO:0007669"/>
    <property type="project" value="UniProtKB-KW"/>
</dbReference>
<dbReference type="GO" id="GO:0003735">
    <property type="term" value="F:structural constituent of ribosome"/>
    <property type="evidence" value="ECO:0007669"/>
    <property type="project" value="InterPro"/>
</dbReference>
<dbReference type="GO" id="GO:0006412">
    <property type="term" value="P:translation"/>
    <property type="evidence" value="ECO:0007669"/>
    <property type="project" value="UniProtKB-UniRule"/>
</dbReference>
<dbReference type="FunFam" id="1.10.287.3980:FF:000001">
    <property type="entry name" value="Mitochondrial ribosomal protein L34"/>
    <property type="match status" value="1"/>
</dbReference>
<dbReference type="Gene3D" id="1.10.287.3980">
    <property type="match status" value="1"/>
</dbReference>
<dbReference type="HAMAP" id="MF_00391">
    <property type="entry name" value="Ribosomal_bL34"/>
    <property type="match status" value="1"/>
</dbReference>
<dbReference type="InterPro" id="IPR000271">
    <property type="entry name" value="Ribosomal_bL34"/>
</dbReference>
<dbReference type="InterPro" id="IPR020939">
    <property type="entry name" value="Ribosomal_bL34_CS"/>
</dbReference>
<dbReference type="NCBIfam" id="TIGR01030">
    <property type="entry name" value="rpmH_bact"/>
    <property type="match status" value="1"/>
</dbReference>
<dbReference type="PANTHER" id="PTHR14503:SF4">
    <property type="entry name" value="LARGE RIBOSOMAL SUBUNIT PROTEIN BL34M"/>
    <property type="match status" value="1"/>
</dbReference>
<dbReference type="PANTHER" id="PTHR14503">
    <property type="entry name" value="MITOCHONDRIAL RIBOSOMAL PROTEIN 34 FAMILY MEMBER"/>
    <property type="match status" value="1"/>
</dbReference>
<dbReference type="Pfam" id="PF00468">
    <property type="entry name" value="Ribosomal_L34"/>
    <property type="match status" value="1"/>
</dbReference>
<dbReference type="PROSITE" id="PS00784">
    <property type="entry name" value="RIBOSOMAL_L34"/>
    <property type="match status" value="1"/>
</dbReference>
<name>RL34_EHRCJ</name>
<feature type="chain" id="PRO_1000013335" description="Large ribosomal subunit protein bL34">
    <location>
        <begin position="1"/>
        <end position="44"/>
    </location>
</feature>
<proteinExistence type="inferred from homology"/>